<dbReference type="EC" id="2.7.7.8" evidence="1"/>
<dbReference type="EMBL" id="CP000316">
    <property type="protein sequence ID" value="ABE45174.1"/>
    <property type="molecule type" value="Genomic_DNA"/>
</dbReference>
<dbReference type="RefSeq" id="WP_011484169.1">
    <property type="nucleotide sequence ID" value="NC_007948.1"/>
</dbReference>
<dbReference type="SMR" id="Q127W8"/>
<dbReference type="STRING" id="296591.Bpro_3260"/>
<dbReference type="KEGG" id="pol:Bpro_3260"/>
<dbReference type="eggNOG" id="COG1185">
    <property type="taxonomic scope" value="Bacteria"/>
</dbReference>
<dbReference type="HOGENOM" id="CLU_004217_2_2_4"/>
<dbReference type="OrthoDB" id="9804305at2"/>
<dbReference type="Proteomes" id="UP000001983">
    <property type="component" value="Chromosome"/>
</dbReference>
<dbReference type="GO" id="GO:0005829">
    <property type="term" value="C:cytosol"/>
    <property type="evidence" value="ECO:0007669"/>
    <property type="project" value="TreeGrafter"/>
</dbReference>
<dbReference type="GO" id="GO:0000175">
    <property type="term" value="F:3'-5'-RNA exonuclease activity"/>
    <property type="evidence" value="ECO:0007669"/>
    <property type="project" value="TreeGrafter"/>
</dbReference>
<dbReference type="GO" id="GO:0000287">
    <property type="term" value="F:magnesium ion binding"/>
    <property type="evidence" value="ECO:0007669"/>
    <property type="project" value="UniProtKB-UniRule"/>
</dbReference>
<dbReference type="GO" id="GO:0004654">
    <property type="term" value="F:polyribonucleotide nucleotidyltransferase activity"/>
    <property type="evidence" value="ECO:0007669"/>
    <property type="project" value="UniProtKB-UniRule"/>
</dbReference>
<dbReference type="GO" id="GO:0003723">
    <property type="term" value="F:RNA binding"/>
    <property type="evidence" value="ECO:0007669"/>
    <property type="project" value="UniProtKB-UniRule"/>
</dbReference>
<dbReference type="GO" id="GO:0006402">
    <property type="term" value="P:mRNA catabolic process"/>
    <property type="evidence" value="ECO:0007669"/>
    <property type="project" value="UniProtKB-UniRule"/>
</dbReference>
<dbReference type="GO" id="GO:0006396">
    <property type="term" value="P:RNA processing"/>
    <property type="evidence" value="ECO:0007669"/>
    <property type="project" value="InterPro"/>
</dbReference>
<dbReference type="CDD" id="cd02393">
    <property type="entry name" value="KH-I_PNPase"/>
    <property type="match status" value="1"/>
</dbReference>
<dbReference type="CDD" id="cd11363">
    <property type="entry name" value="RNase_PH_PNPase_1"/>
    <property type="match status" value="1"/>
</dbReference>
<dbReference type="CDD" id="cd11364">
    <property type="entry name" value="RNase_PH_PNPase_2"/>
    <property type="match status" value="1"/>
</dbReference>
<dbReference type="CDD" id="cd04472">
    <property type="entry name" value="S1_PNPase"/>
    <property type="match status" value="1"/>
</dbReference>
<dbReference type="FunFam" id="2.40.50.140:FF:000023">
    <property type="entry name" value="Polyribonucleotide nucleotidyltransferase"/>
    <property type="match status" value="1"/>
</dbReference>
<dbReference type="FunFam" id="3.30.1370.10:FF:000001">
    <property type="entry name" value="Polyribonucleotide nucleotidyltransferase"/>
    <property type="match status" value="1"/>
</dbReference>
<dbReference type="FunFam" id="3.30.230.70:FF:000001">
    <property type="entry name" value="Polyribonucleotide nucleotidyltransferase"/>
    <property type="match status" value="1"/>
</dbReference>
<dbReference type="FunFam" id="3.30.230.70:FF:000002">
    <property type="entry name" value="Polyribonucleotide nucleotidyltransferase"/>
    <property type="match status" value="1"/>
</dbReference>
<dbReference type="Gene3D" id="3.30.230.70">
    <property type="entry name" value="GHMP Kinase, N-terminal domain"/>
    <property type="match status" value="2"/>
</dbReference>
<dbReference type="Gene3D" id="3.30.1370.10">
    <property type="entry name" value="K Homology domain, type 1"/>
    <property type="match status" value="1"/>
</dbReference>
<dbReference type="Gene3D" id="2.40.50.140">
    <property type="entry name" value="Nucleic acid-binding proteins"/>
    <property type="match status" value="1"/>
</dbReference>
<dbReference type="HAMAP" id="MF_01595">
    <property type="entry name" value="PNPase"/>
    <property type="match status" value="1"/>
</dbReference>
<dbReference type="InterPro" id="IPR001247">
    <property type="entry name" value="ExoRNase_PH_dom1"/>
</dbReference>
<dbReference type="InterPro" id="IPR015847">
    <property type="entry name" value="ExoRNase_PH_dom2"/>
</dbReference>
<dbReference type="InterPro" id="IPR036345">
    <property type="entry name" value="ExoRNase_PH_dom2_sf"/>
</dbReference>
<dbReference type="InterPro" id="IPR004087">
    <property type="entry name" value="KH_dom"/>
</dbReference>
<dbReference type="InterPro" id="IPR004088">
    <property type="entry name" value="KH_dom_type_1"/>
</dbReference>
<dbReference type="InterPro" id="IPR036612">
    <property type="entry name" value="KH_dom_type_1_sf"/>
</dbReference>
<dbReference type="InterPro" id="IPR012340">
    <property type="entry name" value="NA-bd_OB-fold"/>
</dbReference>
<dbReference type="InterPro" id="IPR012162">
    <property type="entry name" value="PNPase"/>
</dbReference>
<dbReference type="InterPro" id="IPR027408">
    <property type="entry name" value="PNPase/RNase_PH_dom_sf"/>
</dbReference>
<dbReference type="InterPro" id="IPR015848">
    <property type="entry name" value="PNPase_PH_RNA-bd_bac/org-type"/>
</dbReference>
<dbReference type="InterPro" id="IPR036456">
    <property type="entry name" value="PNPase_PH_RNA-bd_sf"/>
</dbReference>
<dbReference type="InterPro" id="IPR020568">
    <property type="entry name" value="Ribosomal_Su5_D2-typ_SF"/>
</dbReference>
<dbReference type="InterPro" id="IPR003029">
    <property type="entry name" value="S1_domain"/>
</dbReference>
<dbReference type="NCBIfam" id="TIGR03591">
    <property type="entry name" value="polynuc_phos"/>
    <property type="match status" value="1"/>
</dbReference>
<dbReference type="NCBIfam" id="NF008805">
    <property type="entry name" value="PRK11824.1"/>
    <property type="match status" value="1"/>
</dbReference>
<dbReference type="PANTHER" id="PTHR11252">
    <property type="entry name" value="POLYRIBONUCLEOTIDE NUCLEOTIDYLTRANSFERASE"/>
    <property type="match status" value="1"/>
</dbReference>
<dbReference type="PANTHER" id="PTHR11252:SF0">
    <property type="entry name" value="POLYRIBONUCLEOTIDE NUCLEOTIDYLTRANSFERASE 1, MITOCHONDRIAL"/>
    <property type="match status" value="1"/>
</dbReference>
<dbReference type="Pfam" id="PF00013">
    <property type="entry name" value="KH_1"/>
    <property type="match status" value="1"/>
</dbReference>
<dbReference type="Pfam" id="PF03726">
    <property type="entry name" value="PNPase"/>
    <property type="match status" value="1"/>
</dbReference>
<dbReference type="Pfam" id="PF01138">
    <property type="entry name" value="RNase_PH"/>
    <property type="match status" value="2"/>
</dbReference>
<dbReference type="Pfam" id="PF03725">
    <property type="entry name" value="RNase_PH_C"/>
    <property type="match status" value="2"/>
</dbReference>
<dbReference type="Pfam" id="PF00575">
    <property type="entry name" value="S1"/>
    <property type="match status" value="1"/>
</dbReference>
<dbReference type="PIRSF" id="PIRSF005499">
    <property type="entry name" value="PNPase"/>
    <property type="match status" value="1"/>
</dbReference>
<dbReference type="SMART" id="SM00322">
    <property type="entry name" value="KH"/>
    <property type="match status" value="1"/>
</dbReference>
<dbReference type="SMART" id="SM00316">
    <property type="entry name" value="S1"/>
    <property type="match status" value="1"/>
</dbReference>
<dbReference type="SUPFAM" id="SSF54791">
    <property type="entry name" value="Eukaryotic type KH-domain (KH-domain type I)"/>
    <property type="match status" value="1"/>
</dbReference>
<dbReference type="SUPFAM" id="SSF50249">
    <property type="entry name" value="Nucleic acid-binding proteins"/>
    <property type="match status" value="1"/>
</dbReference>
<dbReference type="SUPFAM" id="SSF46915">
    <property type="entry name" value="Polynucleotide phosphorylase/guanosine pentaphosphate synthase (PNPase/GPSI), domain 3"/>
    <property type="match status" value="1"/>
</dbReference>
<dbReference type="SUPFAM" id="SSF55666">
    <property type="entry name" value="Ribonuclease PH domain 2-like"/>
    <property type="match status" value="2"/>
</dbReference>
<dbReference type="SUPFAM" id="SSF54211">
    <property type="entry name" value="Ribosomal protein S5 domain 2-like"/>
    <property type="match status" value="2"/>
</dbReference>
<dbReference type="PROSITE" id="PS50084">
    <property type="entry name" value="KH_TYPE_1"/>
    <property type="match status" value="1"/>
</dbReference>
<dbReference type="PROSITE" id="PS50126">
    <property type="entry name" value="S1"/>
    <property type="match status" value="1"/>
</dbReference>
<organism>
    <name type="scientific">Polaromonas sp. (strain JS666 / ATCC BAA-500)</name>
    <dbReference type="NCBI Taxonomy" id="296591"/>
    <lineage>
        <taxon>Bacteria</taxon>
        <taxon>Pseudomonadati</taxon>
        <taxon>Pseudomonadota</taxon>
        <taxon>Betaproteobacteria</taxon>
        <taxon>Burkholderiales</taxon>
        <taxon>Comamonadaceae</taxon>
        <taxon>Polaromonas</taxon>
    </lineage>
</organism>
<name>PNP_POLSJ</name>
<reference key="1">
    <citation type="journal article" date="2008" name="Appl. Environ. Microbiol.">
        <title>The genome of Polaromonas sp. strain JS666: insights into the evolution of a hydrocarbon- and xenobiotic-degrading bacterium, and features of relevance to biotechnology.</title>
        <authorList>
            <person name="Mattes T.E."/>
            <person name="Alexander A.K."/>
            <person name="Richardson P.M."/>
            <person name="Munk A.C."/>
            <person name="Han C.S."/>
            <person name="Stothard P."/>
            <person name="Coleman N.V."/>
        </authorList>
    </citation>
    <scope>NUCLEOTIDE SEQUENCE [LARGE SCALE GENOMIC DNA]</scope>
    <source>
        <strain>JS666 / ATCC BAA-500</strain>
    </source>
</reference>
<proteinExistence type="inferred from homology"/>
<feature type="chain" id="PRO_0000329760" description="Polyribonucleotide nucleotidyltransferase">
    <location>
        <begin position="1"/>
        <end position="707"/>
    </location>
</feature>
<feature type="domain" description="KH" evidence="1">
    <location>
        <begin position="555"/>
        <end position="614"/>
    </location>
</feature>
<feature type="domain" description="S1 motif" evidence="1">
    <location>
        <begin position="624"/>
        <end position="692"/>
    </location>
</feature>
<feature type="binding site" evidence="1">
    <location>
        <position position="488"/>
    </location>
    <ligand>
        <name>Mg(2+)</name>
        <dbReference type="ChEBI" id="CHEBI:18420"/>
    </ligand>
</feature>
<feature type="binding site" evidence="1">
    <location>
        <position position="494"/>
    </location>
    <ligand>
        <name>Mg(2+)</name>
        <dbReference type="ChEBI" id="CHEBI:18420"/>
    </ligand>
</feature>
<accession>Q127W8</accession>
<evidence type="ECO:0000255" key="1">
    <source>
        <dbReference type="HAMAP-Rule" id="MF_01595"/>
    </source>
</evidence>
<keyword id="KW-0963">Cytoplasm</keyword>
<keyword id="KW-0460">Magnesium</keyword>
<keyword id="KW-0479">Metal-binding</keyword>
<keyword id="KW-0548">Nucleotidyltransferase</keyword>
<keyword id="KW-1185">Reference proteome</keyword>
<keyword id="KW-0694">RNA-binding</keyword>
<keyword id="KW-0808">Transferase</keyword>
<comment type="function">
    <text evidence="1">Involved in mRNA degradation. Catalyzes the phosphorolysis of single-stranded polyribonucleotides processively in the 3'- to 5'-direction.</text>
</comment>
<comment type="catalytic activity">
    <reaction evidence="1">
        <text>RNA(n+1) + phosphate = RNA(n) + a ribonucleoside 5'-diphosphate</text>
        <dbReference type="Rhea" id="RHEA:22096"/>
        <dbReference type="Rhea" id="RHEA-COMP:14527"/>
        <dbReference type="Rhea" id="RHEA-COMP:17342"/>
        <dbReference type="ChEBI" id="CHEBI:43474"/>
        <dbReference type="ChEBI" id="CHEBI:57930"/>
        <dbReference type="ChEBI" id="CHEBI:140395"/>
        <dbReference type="EC" id="2.7.7.8"/>
    </reaction>
</comment>
<comment type="cofactor">
    <cofactor evidence="1">
        <name>Mg(2+)</name>
        <dbReference type="ChEBI" id="CHEBI:18420"/>
    </cofactor>
</comment>
<comment type="subcellular location">
    <subcellularLocation>
        <location evidence="1">Cytoplasm</location>
    </subcellularLocation>
</comment>
<comment type="similarity">
    <text evidence="1">Belongs to the polyribonucleotide nucleotidyltransferase family.</text>
</comment>
<protein>
    <recommendedName>
        <fullName evidence="1">Polyribonucleotide nucleotidyltransferase</fullName>
        <ecNumber evidence="1">2.7.7.8</ecNumber>
    </recommendedName>
    <alternativeName>
        <fullName evidence="1">Polynucleotide phosphorylase</fullName>
        <shortName evidence="1">PNPase</shortName>
    </alternativeName>
</protein>
<gene>
    <name evidence="1" type="primary">pnp</name>
    <name type="ordered locus">Bpro_3260</name>
</gene>
<sequence>MSIFNKVTKSFQWGQHKVTMETGEVARQASGAVVVDMDGTVVLATVVAKTDAKPGQDFFPLTVDYLEKTYAAGRIPGSFFKREGRPSEFETLTSRLIDRPIRPLFPEGFFNEVQVVIHVLSLNPEVEGDIPALIASSAALSISGIPFNGPIGAARVAYVDGQYVLNPGKTQLKDSKMDLVVAGTEAAVLMVESEAQQLSEEIMLGAVVFGHEQANIAINAIHELVRDAGKPVWDWQAPAKDEPLIAKVNELAGAKLQAAYQIRSKQARTQACRVAYADVMAALKADGVAFDGVTVEGMLFDIEAKIVRSQILAGEPRIDGRDTRTVRAIEIRNSVLPRTHGSALFTRGETQALVVTTLGTERDAQRIDALSGDYEDRFMLHYNMPPFATGETGRVGSPKRREIGHGRLAKRALIAVLPTKEEFPYTMRVVSEITESNGSSSMASVCGGCLSLMDAGVPMKAHVAGIAMGLIKEENRFAVLTDILGDEDHLGDMDFKVAGTTFGITALQMDIKIQGITKEIMQVALAQAKEARMHILGKMQEAMGEAKAEVSDFAPRLYVMKINPEKIRDVIGKGGAVIRALTEETGTQINIEEDGTITIASNDSAKADEAKRRIAEITAEVEIGKVYEGAITKILDFGALVNLLPGKDGLLHISQIAHERVEKVTDYLSEGQIVKVKVLETDEKGRVKLSMKALLDRPAQNQDQDRG</sequence>